<accession>B0R3L9</accession>
<evidence type="ECO:0000255" key="1">
    <source>
        <dbReference type="HAMAP-Rule" id="MF_00803"/>
    </source>
</evidence>
<evidence type="ECO:0000256" key="2">
    <source>
        <dbReference type="SAM" id="MobiDB-lite"/>
    </source>
</evidence>
<gene>
    <name evidence="1" type="primary">nop10</name>
    <name type="ordered locus">OE_1817R</name>
</gene>
<organism>
    <name type="scientific">Halobacterium salinarum (strain ATCC 29341 / DSM 671 / R1)</name>
    <dbReference type="NCBI Taxonomy" id="478009"/>
    <lineage>
        <taxon>Archaea</taxon>
        <taxon>Methanobacteriati</taxon>
        <taxon>Methanobacteriota</taxon>
        <taxon>Stenosarchaea group</taxon>
        <taxon>Halobacteria</taxon>
        <taxon>Halobacteriales</taxon>
        <taxon>Halobacteriaceae</taxon>
        <taxon>Halobacterium</taxon>
        <taxon>Halobacterium salinarum NRC-34001</taxon>
    </lineage>
</organism>
<name>NOP10_HALS3</name>
<feature type="chain" id="PRO_1000133930" description="Ribosome biogenesis protein Nop10">
    <location>
        <begin position="1"/>
        <end position="60"/>
    </location>
</feature>
<feature type="region of interest" description="Disordered" evidence="2">
    <location>
        <begin position="37"/>
        <end position="60"/>
    </location>
</feature>
<feature type="compositionally biased region" description="Basic residues" evidence="2">
    <location>
        <begin position="49"/>
        <end position="60"/>
    </location>
</feature>
<sequence>MKSDIRVCEAWRSHHDGPVYTLSETCPECGGDAVNSAPAPFDPADPHGKYRRALKERRRL</sequence>
<dbReference type="EMBL" id="AM774415">
    <property type="protein sequence ID" value="CAP13333.1"/>
    <property type="molecule type" value="Genomic_DNA"/>
</dbReference>
<dbReference type="RefSeq" id="WP_010902365.1">
    <property type="nucleotide sequence ID" value="NC_010364.1"/>
</dbReference>
<dbReference type="SMR" id="B0R3L9"/>
<dbReference type="EnsemblBacteria" id="CAP13333">
    <property type="protein sequence ID" value="CAP13333"/>
    <property type="gene ID" value="OE_1817R"/>
</dbReference>
<dbReference type="KEGG" id="hsl:OE_1817R"/>
<dbReference type="HOGENOM" id="CLU_196480_1_0_2"/>
<dbReference type="PhylomeDB" id="B0R3L9"/>
<dbReference type="Proteomes" id="UP000001321">
    <property type="component" value="Chromosome"/>
</dbReference>
<dbReference type="GO" id="GO:1990904">
    <property type="term" value="C:ribonucleoprotein complex"/>
    <property type="evidence" value="ECO:0007669"/>
    <property type="project" value="UniProtKB-KW"/>
</dbReference>
<dbReference type="GO" id="GO:0030515">
    <property type="term" value="F:snoRNA binding"/>
    <property type="evidence" value="ECO:0007669"/>
    <property type="project" value="InterPro"/>
</dbReference>
<dbReference type="GO" id="GO:0001522">
    <property type="term" value="P:pseudouridine synthesis"/>
    <property type="evidence" value="ECO:0007669"/>
    <property type="project" value="InterPro"/>
</dbReference>
<dbReference type="GO" id="GO:0006364">
    <property type="term" value="P:rRNA processing"/>
    <property type="evidence" value="ECO:0007669"/>
    <property type="project" value="UniProtKB-UniRule"/>
</dbReference>
<dbReference type="Gene3D" id="2.20.28.40">
    <property type="entry name" value="H/ACA ribonucleoprotein complex, subunit Nop10"/>
    <property type="match status" value="1"/>
</dbReference>
<dbReference type="HAMAP" id="MF_00803">
    <property type="entry name" value="Nop10"/>
    <property type="match status" value="1"/>
</dbReference>
<dbReference type="InterPro" id="IPR007264">
    <property type="entry name" value="H/ACA_rnp_Nop10"/>
</dbReference>
<dbReference type="InterPro" id="IPR036756">
    <property type="entry name" value="H/ACA_rnp_Nop10_sf"/>
</dbReference>
<dbReference type="InterPro" id="IPR023532">
    <property type="entry name" value="Nop10_arc-typ"/>
</dbReference>
<dbReference type="NCBIfam" id="NF009623">
    <property type="entry name" value="PRK13130.1"/>
    <property type="match status" value="1"/>
</dbReference>
<dbReference type="Pfam" id="PF04135">
    <property type="entry name" value="Nop10p"/>
    <property type="match status" value="1"/>
</dbReference>
<dbReference type="SUPFAM" id="SSF144210">
    <property type="entry name" value="Nop10-like SnoRNP"/>
    <property type="match status" value="1"/>
</dbReference>
<proteinExistence type="inferred from homology"/>
<keyword id="KW-0687">Ribonucleoprotein</keyword>
<keyword id="KW-0690">Ribosome biogenesis</keyword>
<keyword id="KW-0698">rRNA processing</keyword>
<reference key="1">
    <citation type="journal article" date="2008" name="Genomics">
        <title>Evolution in the laboratory: the genome of Halobacterium salinarum strain R1 compared to that of strain NRC-1.</title>
        <authorList>
            <person name="Pfeiffer F."/>
            <person name="Schuster S.C."/>
            <person name="Broicher A."/>
            <person name="Falb M."/>
            <person name="Palm P."/>
            <person name="Rodewald K."/>
            <person name="Ruepp A."/>
            <person name="Soppa J."/>
            <person name="Tittor J."/>
            <person name="Oesterhelt D."/>
        </authorList>
    </citation>
    <scope>NUCLEOTIDE SEQUENCE [LARGE SCALE GENOMIC DNA]</scope>
    <source>
        <strain>ATCC 29341 / DSM 671 / R1</strain>
    </source>
</reference>
<protein>
    <recommendedName>
        <fullName evidence="1">Ribosome biogenesis protein Nop10</fullName>
    </recommendedName>
</protein>
<comment type="function">
    <text evidence="1">Involved in ribosome biogenesis; more specifically in 18S rRNA pseudouridylation and in cleavage of pre-rRNA.</text>
</comment>
<comment type="similarity">
    <text evidence="1">Belongs to the NOP10 family.</text>
</comment>